<protein>
    <recommendedName>
        <fullName evidence="1">Small ribosomal subunit protein eS1</fullName>
    </recommendedName>
    <alternativeName>
        <fullName evidence="2">30S ribosomal protein S3Ae</fullName>
    </alternativeName>
    <alternativeName>
        <fullName evidence="1">Ribosomal protein S1e</fullName>
    </alternativeName>
</protein>
<evidence type="ECO:0000255" key="1">
    <source>
        <dbReference type="HAMAP-Rule" id="MF_00359"/>
    </source>
</evidence>
<evidence type="ECO:0000305" key="2"/>
<proteinExistence type="inferred from homology"/>
<comment type="similarity">
    <text evidence="1">Belongs to the eukaryotic ribosomal protein eS1 family.</text>
</comment>
<keyword id="KW-0687">Ribonucleoprotein</keyword>
<keyword id="KW-0689">Ribosomal protein</keyword>
<accession>C3NEB9</accession>
<feature type="chain" id="PRO_1000205385" description="Small ribosomal subunit protein eS1">
    <location>
        <begin position="1"/>
        <end position="208"/>
    </location>
</feature>
<sequence length="208" mass="23616">MSAKGGTIKDKWKMKKWYSIIAPKVFGEVSLGSTPAYDVTQTIGRRVETTLYDLTGDFSQVYVHLYFKIVSNEGDRLITRFVGHELSRDYLRSLIRRKSSKVNSVFDVTTKDGYVVRVKGLVLTTYKCHQSQKTAIRKIINETISKKASELTFDDFTQEVVFGRLANEIFEATKKIYPLRKAEIEKTKVLKVPENLGKQVESSSVSSG</sequence>
<reference key="1">
    <citation type="journal article" date="2009" name="Proc. Natl. Acad. Sci. U.S.A.">
        <title>Biogeography of the Sulfolobus islandicus pan-genome.</title>
        <authorList>
            <person name="Reno M.L."/>
            <person name="Held N.L."/>
            <person name="Fields C.J."/>
            <person name="Burke P.V."/>
            <person name="Whitaker R.J."/>
        </authorList>
    </citation>
    <scope>NUCLEOTIDE SEQUENCE [LARGE SCALE GENOMIC DNA]</scope>
    <source>
        <strain>Y.G.57.14 / Yellowstone #1</strain>
    </source>
</reference>
<gene>
    <name evidence="1" type="primary">rps3ae</name>
    <name type="ordered locus">YG5714_1391</name>
</gene>
<organism>
    <name type="scientific">Saccharolobus islandicus (strain Y.G.57.14 / Yellowstone #1)</name>
    <name type="common">Sulfolobus islandicus</name>
    <dbReference type="NCBI Taxonomy" id="439386"/>
    <lineage>
        <taxon>Archaea</taxon>
        <taxon>Thermoproteota</taxon>
        <taxon>Thermoprotei</taxon>
        <taxon>Sulfolobales</taxon>
        <taxon>Sulfolobaceae</taxon>
        <taxon>Saccharolobus</taxon>
    </lineage>
</organism>
<dbReference type="EMBL" id="CP001403">
    <property type="protein sequence ID" value="ACP45658.1"/>
    <property type="molecule type" value="Genomic_DNA"/>
</dbReference>
<dbReference type="RefSeq" id="WP_012711394.1">
    <property type="nucleotide sequence ID" value="NC_012622.1"/>
</dbReference>
<dbReference type="SMR" id="C3NEB9"/>
<dbReference type="KEGG" id="siy:YG5714_1391"/>
<dbReference type="HOGENOM" id="CLU_062507_1_0_2"/>
<dbReference type="Proteomes" id="UP000002308">
    <property type="component" value="Chromosome"/>
</dbReference>
<dbReference type="GO" id="GO:1990904">
    <property type="term" value="C:ribonucleoprotein complex"/>
    <property type="evidence" value="ECO:0007669"/>
    <property type="project" value="UniProtKB-KW"/>
</dbReference>
<dbReference type="GO" id="GO:0005840">
    <property type="term" value="C:ribosome"/>
    <property type="evidence" value="ECO:0007669"/>
    <property type="project" value="UniProtKB-KW"/>
</dbReference>
<dbReference type="GO" id="GO:0003735">
    <property type="term" value="F:structural constituent of ribosome"/>
    <property type="evidence" value="ECO:0007669"/>
    <property type="project" value="InterPro"/>
</dbReference>
<dbReference type="GO" id="GO:0006412">
    <property type="term" value="P:translation"/>
    <property type="evidence" value="ECO:0007669"/>
    <property type="project" value="UniProtKB-UniRule"/>
</dbReference>
<dbReference type="HAMAP" id="MF_00359">
    <property type="entry name" value="Ribosomal_eS1"/>
    <property type="match status" value="1"/>
</dbReference>
<dbReference type="InterPro" id="IPR001593">
    <property type="entry name" value="Ribosomal_eS1"/>
</dbReference>
<dbReference type="InterPro" id="IPR030838">
    <property type="entry name" value="Ribosomal_eS1_arc"/>
</dbReference>
<dbReference type="NCBIfam" id="NF003142">
    <property type="entry name" value="PRK04057.1"/>
    <property type="match status" value="1"/>
</dbReference>
<dbReference type="PANTHER" id="PTHR11830">
    <property type="entry name" value="40S RIBOSOMAL PROTEIN S3A"/>
    <property type="match status" value="1"/>
</dbReference>
<dbReference type="Pfam" id="PF01015">
    <property type="entry name" value="Ribosomal_S3Ae"/>
    <property type="match status" value="1"/>
</dbReference>
<dbReference type="SMART" id="SM01397">
    <property type="entry name" value="Ribosomal_S3Ae"/>
    <property type="match status" value="1"/>
</dbReference>
<name>RS3A_SACI7</name>